<dbReference type="EMBL" id="CP000826">
    <property type="protein sequence ID" value="ABV39197.1"/>
    <property type="molecule type" value="Genomic_DNA"/>
</dbReference>
<dbReference type="SMR" id="A8G7V7"/>
<dbReference type="STRING" id="399741.Spro_0087"/>
<dbReference type="KEGG" id="spe:Spro_0087"/>
<dbReference type="eggNOG" id="COG3058">
    <property type="taxonomic scope" value="Bacteria"/>
</dbReference>
<dbReference type="HOGENOM" id="CLU_055275_0_0_6"/>
<dbReference type="OrthoDB" id="9794151at2"/>
<dbReference type="GO" id="GO:0005829">
    <property type="term" value="C:cytosol"/>
    <property type="evidence" value="ECO:0007669"/>
    <property type="project" value="TreeGrafter"/>
</dbReference>
<dbReference type="GO" id="GO:0008199">
    <property type="term" value="F:ferric iron binding"/>
    <property type="evidence" value="ECO:0007669"/>
    <property type="project" value="TreeGrafter"/>
</dbReference>
<dbReference type="GO" id="GO:0051604">
    <property type="term" value="P:protein maturation"/>
    <property type="evidence" value="ECO:0007669"/>
    <property type="project" value="TreeGrafter"/>
</dbReference>
<dbReference type="CDD" id="cd16341">
    <property type="entry name" value="FdhE"/>
    <property type="match status" value="1"/>
</dbReference>
<dbReference type="FunFam" id="3.90.1670.10:FF:000001">
    <property type="entry name" value="Protein FdhE"/>
    <property type="match status" value="1"/>
</dbReference>
<dbReference type="Gene3D" id="3.90.1670.10">
    <property type="entry name" value="FdhE-like domain"/>
    <property type="match status" value="1"/>
</dbReference>
<dbReference type="HAMAP" id="MF_00611">
    <property type="entry name" value="FdeH"/>
    <property type="match status" value="1"/>
</dbReference>
<dbReference type="InterPro" id="IPR024064">
    <property type="entry name" value="FdhE-like_sf"/>
</dbReference>
<dbReference type="InterPro" id="IPR056796">
    <property type="entry name" value="FdhE_C"/>
</dbReference>
<dbReference type="InterPro" id="IPR056797">
    <property type="entry name" value="FdhE_central"/>
</dbReference>
<dbReference type="InterPro" id="IPR056774">
    <property type="entry name" value="FdhE_N"/>
</dbReference>
<dbReference type="InterPro" id="IPR006452">
    <property type="entry name" value="Formate_DH_accessory"/>
</dbReference>
<dbReference type="NCBIfam" id="TIGR01562">
    <property type="entry name" value="FdhE"/>
    <property type="match status" value="1"/>
</dbReference>
<dbReference type="NCBIfam" id="NF002925">
    <property type="entry name" value="PRK03564.1"/>
    <property type="match status" value="1"/>
</dbReference>
<dbReference type="PANTHER" id="PTHR37689">
    <property type="entry name" value="PROTEIN FDHE"/>
    <property type="match status" value="1"/>
</dbReference>
<dbReference type="PANTHER" id="PTHR37689:SF1">
    <property type="entry name" value="PROTEIN FDHE"/>
    <property type="match status" value="1"/>
</dbReference>
<dbReference type="Pfam" id="PF24860">
    <property type="entry name" value="FdhE_C"/>
    <property type="match status" value="1"/>
</dbReference>
<dbReference type="Pfam" id="PF24859">
    <property type="entry name" value="FdhE_central"/>
    <property type="match status" value="1"/>
</dbReference>
<dbReference type="Pfam" id="PF04216">
    <property type="entry name" value="FdhE_N"/>
    <property type="match status" value="1"/>
</dbReference>
<dbReference type="PIRSF" id="PIRSF018296">
    <property type="entry name" value="Format_dh_formtn"/>
    <property type="match status" value="1"/>
</dbReference>
<dbReference type="SUPFAM" id="SSF144020">
    <property type="entry name" value="FdhE-like"/>
    <property type="match status" value="1"/>
</dbReference>
<gene>
    <name evidence="1" type="primary">fdhE</name>
    <name type="ordered locus">Spro_0087</name>
</gene>
<accession>A8G7V7</accession>
<keyword id="KW-0963">Cytoplasm</keyword>
<proteinExistence type="inferred from homology"/>
<protein>
    <recommendedName>
        <fullName evidence="1">Protein FdhE homolog</fullName>
    </recommendedName>
</protein>
<feature type="chain" id="PRO_1000061294" description="Protein FdhE homolog">
    <location>
        <begin position="1"/>
        <end position="309"/>
    </location>
</feature>
<evidence type="ECO:0000255" key="1">
    <source>
        <dbReference type="HAMAP-Rule" id="MF_00611"/>
    </source>
</evidence>
<name>FDHE_SERP5</name>
<sequence length="309" mass="34239">MSIRIVPKEQLGAQREKSTTAETIPPLLFANLKSLYSRRAERLRKLATDNPLGDYLNFAAQLAEAQHHALHDNPLTLDLTEELQQGAASGKPPLDLSVFPRSEHWHKLLVSLIAELRPQAPEHILAVLDNLEKASSHELELLADALLNQDFGKIGSEKAPFIWAALSLYWAQMAGLIPGKARAEYGEHRQFCPVCGSIPVSSVVHIGTVSGLRYLHCNLCESEWHVVRIKCSNCEQTRDLNYWSLDSELAAVKAESCGDCGTYLKILYQEKDPQVEAVADDLATLVLDAKMEDEGFARSSINPFLFPGS</sequence>
<organism>
    <name type="scientific">Serratia proteamaculans (strain 568)</name>
    <dbReference type="NCBI Taxonomy" id="399741"/>
    <lineage>
        <taxon>Bacteria</taxon>
        <taxon>Pseudomonadati</taxon>
        <taxon>Pseudomonadota</taxon>
        <taxon>Gammaproteobacteria</taxon>
        <taxon>Enterobacterales</taxon>
        <taxon>Yersiniaceae</taxon>
        <taxon>Serratia</taxon>
    </lineage>
</organism>
<comment type="function">
    <text evidence="1">Necessary for formate dehydrogenase activity.</text>
</comment>
<comment type="subcellular location">
    <subcellularLocation>
        <location evidence="1">Cytoplasm</location>
    </subcellularLocation>
</comment>
<comment type="similarity">
    <text evidence="1">Belongs to the FdhE family.</text>
</comment>
<reference key="1">
    <citation type="submission" date="2007-09" db="EMBL/GenBank/DDBJ databases">
        <title>Complete sequence of chromosome of Serratia proteamaculans 568.</title>
        <authorList>
            <consortium name="US DOE Joint Genome Institute"/>
            <person name="Copeland A."/>
            <person name="Lucas S."/>
            <person name="Lapidus A."/>
            <person name="Barry K."/>
            <person name="Glavina del Rio T."/>
            <person name="Dalin E."/>
            <person name="Tice H."/>
            <person name="Pitluck S."/>
            <person name="Chain P."/>
            <person name="Malfatti S."/>
            <person name="Shin M."/>
            <person name="Vergez L."/>
            <person name="Schmutz J."/>
            <person name="Larimer F."/>
            <person name="Land M."/>
            <person name="Hauser L."/>
            <person name="Kyrpides N."/>
            <person name="Kim E."/>
            <person name="Taghavi S."/>
            <person name="Newman L."/>
            <person name="Vangronsveld J."/>
            <person name="van der Lelie D."/>
            <person name="Richardson P."/>
        </authorList>
    </citation>
    <scope>NUCLEOTIDE SEQUENCE [LARGE SCALE GENOMIC DNA]</scope>
    <source>
        <strain>568</strain>
    </source>
</reference>